<organism>
    <name type="scientific">Bacteroides fragilis (strain ATCC 25285 / DSM 2151 / CCUG 4856 / JCM 11019 / LMG 10263 / NCTC 9343 / Onslow / VPI 2553 / EN-2)</name>
    <dbReference type="NCBI Taxonomy" id="272559"/>
    <lineage>
        <taxon>Bacteria</taxon>
        <taxon>Pseudomonadati</taxon>
        <taxon>Bacteroidota</taxon>
        <taxon>Bacteroidia</taxon>
        <taxon>Bacteroidales</taxon>
        <taxon>Bacteroidaceae</taxon>
        <taxon>Bacteroides</taxon>
    </lineage>
</organism>
<comment type="catalytic activity">
    <reaction evidence="1">
        <text>5-amino-1-(5-phospho-D-ribosyl)imidazole-4-carboxylate + L-aspartate + ATP = (2S)-2-[5-amino-1-(5-phospho-beta-D-ribosyl)imidazole-4-carboxamido]succinate + ADP + phosphate + 2 H(+)</text>
        <dbReference type="Rhea" id="RHEA:22628"/>
        <dbReference type="ChEBI" id="CHEBI:15378"/>
        <dbReference type="ChEBI" id="CHEBI:29991"/>
        <dbReference type="ChEBI" id="CHEBI:30616"/>
        <dbReference type="ChEBI" id="CHEBI:43474"/>
        <dbReference type="ChEBI" id="CHEBI:58443"/>
        <dbReference type="ChEBI" id="CHEBI:77657"/>
        <dbReference type="ChEBI" id="CHEBI:456216"/>
        <dbReference type="EC" id="6.3.2.6"/>
    </reaction>
</comment>
<comment type="pathway">
    <text evidence="1">Purine metabolism; IMP biosynthesis via de novo pathway; 5-amino-1-(5-phospho-D-ribosyl)imidazole-4-carboxamide from 5-amino-1-(5-phospho-D-ribosyl)imidazole-4-carboxylate: step 1/2.</text>
</comment>
<comment type="similarity">
    <text evidence="1">Belongs to the SAICAR synthetase family.</text>
</comment>
<feature type="chain" id="PRO_1000018667" description="Phosphoribosylaminoimidazole-succinocarboxamide synthase">
    <location>
        <begin position="1"/>
        <end position="314"/>
    </location>
</feature>
<evidence type="ECO:0000255" key="1">
    <source>
        <dbReference type="HAMAP-Rule" id="MF_00137"/>
    </source>
</evidence>
<name>PUR7_BACFN</name>
<dbReference type="EC" id="6.3.2.6" evidence="1"/>
<dbReference type="EMBL" id="CR626927">
    <property type="protein sequence ID" value="CAH06583.1"/>
    <property type="molecule type" value="Genomic_DNA"/>
</dbReference>
<dbReference type="RefSeq" id="WP_005785154.1">
    <property type="nucleotide sequence ID" value="NZ_UFTH01000001.1"/>
</dbReference>
<dbReference type="SMR" id="Q5LH03"/>
<dbReference type="PaxDb" id="272559-BF9343_0802"/>
<dbReference type="KEGG" id="bfs:BF9343_0802"/>
<dbReference type="eggNOG" id="COG0152">
    <property type="taxonomic scope" value="Bacteria"/>
</dbReference>
<dbReference type="HOGENOM" id="CLU_045637_0_1_10"/>
<dbReference type="UniPathway" id="UPA00074">
    <property type="reaction ID" value="UER00131"/>
</dbReference>
<dbReference type="Proteomes" id="UP000006731">
    <property type="component" value="Chromosome"/>
</dbReference>
<dbReference type="GO" id="GO:0005737">
    <property type="term" value="C:cytoplasm"/>
    <property type="evidence" value="ECO:0007669"/>
    <property type="project" value="TreeGrafter"/>
</dbReference>
<dbReference type="GO" id="GO:0005524">
    <property type="term" value="F:ATP binding"/>
    <property type="evidence" value="ECO:0007669"/>
    <property type="project" value="UniProtKB-KW"/>
</dbReference>
<dbReference type="GO" id="GO:0004639">
    <property type="term" value="F:phosphoribosylaminoimidazolesuccinocarboxamide synthase activity"/>
    <property type="evidence" value="ECO:0007669"/>
    <property type="project" value="UniProtKB-UniRule"/>
</dbReference>
<dbReference type="GO" id="GO:0006189">
    <property type="term" value="P:'de novo' IMP biosynthetic process"/>
    <property type="evidence" value="ECO:0007669"/>
    <property type="project" value="UniProtKB-UniRule"/>
</dbReference>
<dbReference type="CDD" id="cd01414">
    <property type="entry name" value="SAICAR_synt_Sc"/>
    <property type="match status" value="1"/>
</dbReference>
<dbReference type="FunFam" id="3.30.200.20:FF:000199">
    <property type="entry name" value="Phosphoribosylaminoimidazole-succinocarboxamide synthase"/>
    <property type="match status" value="1"/>
</dbReference>
<dbReference type="FunFam" id="3.30.470.20:FF:000015">
    <property type="entry name" value="Phosphoribosylaminoimidazole-succinocarboxamide synthase"/>
    <property type="match status" value="1"/>
</dbReference>
<dbReference type="Gene3D" id="3.30.470.20">
    <property type="entry name" value="ATP-grasp fold, B domain"/>
    <property type="match status" value="1"/>
</dbReference>
<dbReference type="Gene3D" id="3.30.200.20">
    <property type="entry name" value="Phosphorylase Kinase, domain 1"/>
    <property type="match status" value="1"/>
</dbReference>
<dbReference type="HAMAP" id="MF_00137">
    <property type="entry name" value="SAICAR_synth"/>
    <property type="match status" value="1"/>
</dbReference>
<dbReference type="InterPro" id="IPR028923">
    <property type="entry name" value="SAICAR_synt/ADE2_N"/>
</dbReference>
<dbReference type="InterPro" id="IPR018236">
    <property type="entry name" value="SAICAR_synthetase_CS"/>
</dbReference>
<dbReference type="NCBIfam" id="NF009251">
    <property type="entry name" value="PRK12607.1"/>
    <property type="match status" value="1"/>
</dbReference>
<dbReference type="NCBIfam" id="NF010568">
    <property type="entry name" value="PRK13961.1"/>
    <property type="match status" value="1"/>
</dbReference>
<dbReference type="PANTHER" id="PTHR43700">
    <property type="entry name" value="PHOSPHORIBOSYLAMINOIMIDAZOLE-SUCCINOCARBOXAMIDE SYNTHASE"/>
    <property type="match status" value="1"/>
</dbReference>
<dbReference type="PANTHER" id="PTHR43700:SF1">
    <property type="entry name" value="PHOSPHORIBOSYLAMINOIMIDAZOLE-SUCCINOCARBOXAMIDE SYNTHASE"/>
    <property type="match status" value="1"/>
</dbReference>
<dbReference type="Pfam" id="PF01259">
    <property type="entry name" value="SAICAR_synt"/>
    <property type="match status" value="1"/>
</dbReference>
<dbReference type="SUPFAM" id="SSF56104">
    <property type="entry name" value="SAICAR synthase-like"/>
    <property type="match status" value="1"/>
</dbReference>
<dbReference type="PROSITE" id="PS01058">
    <property type="entry name" value="SAICAR_SYNTHETASE_2"/>
    <property type="match status" value="1"/>
</dbReference>
<gene>
    <name evidence="1" type="primary">purC</name>
    <name type="ordered locus">BF0840</name>
</gene>
<protein>
    <recommendedName>
        <fullName evidence="1">Phosphoribosylaminoimidazole-succinocarboxamide synthase</fullName>
        <ecNumber evidence="1">6.3.2.6</ecNumber>
    </recommendedName>
    <alternativeName>
        <fullName evidence="1">SAICAR synthetase</fullName>
    </alternativeName>
</protein>
<sequence>MKALTKTDFNFPGQKSVYHGKVRDVYNINGEQLVMVATDRISAFDVVLPEGIPYKGQMLNQIAAKFLDATTDICPNWKLATPDPMVTVGVLCEGFPVEMIVRGYLCGSAWRAYKNGVREICGVKLPEGMKENQKFPEPIVTPTTKAEMGLHDEDISKEEILAQGLATPEEYAILEKYTLALFKRGTEIAAERGLILVDTKYEFGKHNGTIYLMDEIHTPDSSRYFYAEGYQERFEKGEAQKQLSKEFVREWLMENGFQGKEGQKVPEMTPAIVESISERYIELFENITGEKFVKEDTSNIAERIEKNVMAFLAK</sequence>
<keyword id="KW-0067">ATP-binding</keyword>
<keyword id="KW-0436">Ligase</keyword>
<keyword id="KW-0547">Nucleotide-binding</keyword>
<keyword id="KW-0658">Purine biosynthesis</keyword>
<proteinExistence type="inferred from homology"/>
<accession>Q5LH03</accession>
<reference key="1">
    <citation type="journal article" date="2005" name="Science">
        <title>Extensive DNA inversions in the B. fragilis genome control variable gene expression.</title>
        <authorList>
            <person name="Cerdeno-Tarraga A.-M."/>
            <person name="Patrick S."/>
            <person name="Crossman L.C."/>
            <person name="Blakely G."/>
            <person name="Abratt V."/>
            <person name="Lennard N."/>
            <person name="Poxton I."/>
            <person name="Duerden B."/>
            <person name="Harris B."/>
            <person name="Quail M.A."/>
            <person name="Barron A."/>
            <person name="Clark L."/>
            <person name="Corton C."/>
            <person name="Doggett J."/>
            <person name="Holden M.T.G."/>
            <person name="Larke N."/>
            <person name="Line A."/>
            <person name="Lord A."/>
            <person name="Norbertczak H."/>
            <person name="Ormond D."/>
            <person name="Price C."/>
            <person name="Rabbinowitsch E."/>
            <person name="Woodward J."/>
            <person name="Barrell B.G."/>
            <person name="Parkhill J."/>
        </authorList>
    </citation>
    <scope>NUCLEOTIDE SEQUENCE [LARGE SCALE GENOMIC DNA]</scope>
    <source>
        <strain>ATCC 25285 / DSM 2151 / CCUG 4856 / JCM 11019 / LMG 10263 / NCTC 9343 / Onslow / VPI 2553 / EN-2</strain>
    </source>
</reference>